<organism>
    <name type="scientific">Apis mellifera ligustica</name>
    <name type="common">Common honeybee</name>
    <name type="synonym">Italian honeybee</name>
    <dbReference type="NCBI Taxonomy" id="7469"/>
    <lineage>
        <taxon>Eukaryota</taxon>
        <taxon>Metazoa</taxon>
        <taxon>Ecdysozoa</taxon>
        <taxon>Arthropoda</taxon>
        <taxon>Hexapoda</taxon>
        <taxon>Insecta</taxon>
        <taxon>Pterygota</taxon>
        <taxon>Neoptera</taxon>
        <taxon>Endopterygota</taxon>
        <taxon>Hymenoptera</taxon>
        <taxon>Apocrita</taxon>
        <taxon>Aculeata</taxon>
        <taxon>Apoidea</taxon>
        <taxon>Anthophila</taxon>
        <taxon>Apidae</taxon>
        <taxon>Apis</taxon>
    </lineage>
</organism>
<geneLocation type="mitochondrion"/>
<gene>
    <name type="primary">ND4</name>
</gene>
<dbReference type="EC" id="7.1.1.2"/>
<dbReference type="EMBL" id="L06178">
    <property type="protein sequence ID" value="AAB96806.1"/>
    <property type="molecule type" value="Genomic_DNA"/>
</dbReference>
<dbReference type="PIR" id="S52968">
    <property type="entry name" value="S52968"/>
</dbReference>
<dbReference type="RefSeq" id="NP_008090.1">
    <property type="nucleotide sequence ID" value="NC_001566.1"/>
</dbReference>
<dbReference type="SMR" id="P34853"/>
<dbReference type="GeneID" id="807702"/>
<dbReference type="CTD" id="4538"/>
<dbReference type="GO" id="GO:0031966">
    <property type="term" value="C:mitochondrial membrane"/>
    <property type="evidence" value="ECO:0007669"/>
    <property type="project" value="UniProtKB-SubCell"/>
</dbReference>
<dbReference type="GO" id="GO:0008137">
    <property type="term" value="F:NADH dehydrogenase (ubiquinone) activity"/>
    <property type="evidence" value="ECO:0007669"/>
    <property type="project" value="UniProtKB-EC"/>
</dbReference>
<dbReference type="GO" id="GO:0048039">
    <property type="term" value="F:ubiquinone binding"/>
    <property type="evidence" value="ECO:0007669"/>
    <property type="project" value="TreeGrafter"/>
</dbReference>
<dbReference type="GO" id="GO:0042773">
    <property type="term" value="P:ATP synthesis coupled electron transport"/>
    <property type="evidence" value="ECO:0007669"/>
    <property type="project" value="InterPro"/>
</dbReference>
<dbReference type="GO" id="GO:0015990">
    <property type="term" value="P:electron transport coupled proton transport"/>
    <property type="evidence" value="ECO:0007669"/>
    <property type="project" value="TreeGrafter"/>
</dbReference>
<dbReference type="InterPro" id="IPR003918">
    <property type="entry name" value="NADH_UbQ_OxRdtase"/>
</dbReference>
<dbReference type="InterPro" id="IPR001750">
    <property type="entry name" value="ND/Mrp_TM"/>
</dbReference>
<dbReference type="PANTHER" id="PTHR43507">
    <property type="entry name" value="NADH-UBIQUINONE OXIDOREDUCTASE CHAIN 4"/>
    <property type="match status" value="1"/>
</dbReference>
<dbReference type="PANTHER" id="PTHR43507:SF20">
    <property type="entry name" value="NADH-UBIQUINONE OXIDOREDUCTASE CHAIN 4"/>
    <property type="match status" value="1"/>
</dbReference>
<dbReference type="Pfam" id="PF00361">
    <property type="entry name" value="Proton_antipo_M"/>
    <property type="match status" value="1"/>
</dbReference>
<dbReference type="PRINTS" id="PR01437">
    <property type="entry name" value="NUOXDRDTASE4"/>
</dbReference>
<evidence type="ECO:0000250" key="1"/>
<evidence type="ECO:0000255" key="2"/>
<evidence type="ECO:0000305" key="3"/>
<sequence>MYLLLLLIMLNMLMMSMIYLFMLFMNKMKNNLNLIIGNLIIINLLLNLFNLNWIDWIYIFCNLSFNMYSYGLIMLTLWIFGLIFISLNNNSLNCLFMNLLLMISLLLVFLSMNLLLFYLFYEFGLLLIFYLVVKWGYSENRWLSGFYLMFYTMIFSLPMLYIIYYIYLIDYSLNFMLMEMLNLNLNMMLFIYLLMSFLVKIPIYLFHGWLLKAHVEAPYYGSMILASIMLKLGGYGMLRLMIIYKNEFILIQKILVMINSFGVLILSLMCLSQFDMKSIIAISSIVHMGLMIMSMMTFLKISLIGGYLMMISHGLSSSGLFFLVNVIYSQTNSRLMFINKGMINFMPSMSLLWFMLCSSNMGSPVSLNLISEVMLLIGMISWLKFMMLILMMYCLFSFIYSIYLFMFINHGKIFIMFKIKNGILVEYFVLLLHWIPLNLMFLKLYFI</sequence>
<feature type="chain" id="PRO_0000117888" description="NADH-ubiquinone oxidoreductase chain 4">
    <location>
        <begin position="1"/>
        <end position="447"/>
    </location>
</feature>
<feature type="transmembrane region" description="Helical" evidence="2">
    <location>
        <begin position="4"/>
        <end position="24"/>
    </location>
</feature>
<feature type="transmembrane region" description="Helical" evidence="2">
    <location>
        <begin position="34"/>
        <end position="54"/>
    </location>
</feature>
<feature type="transmembrane region" description="Helical" evidence="2">
    <location>
        <begin position="67"/>
        <end position="87"/>
    </location>
</feature>
<feature type="transmembrane region" description="Helical" evidence="2">
    <location>
        <begin position="100"/>
        <end position="120"/>
    </location>
</feature>
<feature type="transmembrane region" description="Helical" evidence="2">
    <location>
        <begin position="149"/>
        <end position="169"/>
    </location>
</feature>
<feature type="transmembrane region" description="Helical" evidence="2">
    <location>
        <begin position="189"/>
        <end position="209"/>
    </location>
</feature>
<feature type="transmembrane region" description="Helical" evidence="2">
    <location>
        <begin position="223"/>
        <end position="243"/>
    </location>
</feature>
<feature type="transmembrane region" description="Helical" evidence="2">
    <location>
        <begin position="248"/>
        <end position="268"/>
    </location>
</feature>
<feature type="transmembrane region" description="Helical" evidence="2">
    <location>
        <begin position="279"/>
        <end position="299"/>
    </location>
</feature>
<feature type="transmembrane region" description="Helical" evidence="2">
    <location>
        <begin position="304"/>
        <end position="324"/>
    </location>
</feature>
<feature type="transmembrane region" description="Helical" evidence="2">
    <location>
        <begin position="349"/>
        <end position="371"/>
    </location>
</feature>
<feature type="transmembrane region" description="Helical" evidence="2">
    <location>
        <begin position="388"/>
        <end position="408"/>
    </location>
</feature>
<feature type="transmembrane region" description="Helical" evidence="2">
    <location>
        <begin position="422"/>
        <end position="442"/>
    </location>
</feature>
<proteinExistence type="inferred from homology"/>
<protein>
    <recommendedName>
        <fullName>NADH-ubiquinone oxidoreductase chain 4</fullName>
        <ecNumber>7.1.1.2</ecNumber>
    </recommendedName>
    <alternativeName>
        <fullName>NADH dehydrogenase subunit 4</fullName>
    </alternativeName>
</protein>
<reference key="1">
    <citation type="journal article" date="1993" name="Genetics">
        <title>The mitochondrial genome of the honeybee Apis mellifera: complete sequence and genome organization.</title>
        <authorList>
            <person name="Crozier R.H."/>
            <person name="Crozier Y.C."/>
        </authorList>
    </citation>
    <scope>NUCLEOTIDE SEQUENCE [GENOMIC DNA]</scope>
    <source>
        <tissue>Thorax</tissue>
    </source>
</reference>
<accession>P34853</accession>
<comment type="function">
    <text evidence="1">Core subunit of the mitochondrial membrane respiratory chain NADH dehydrogenase (Complex I) that is believed to belong to the minimal assembly required for catalysis. Complex I functions in the transfer of electrons from NADH to the respiratory chain. The immediate electron acceptor for the enzyme is believed to be ubiquinone (By similarity).</text>
</comment>
<comment type="catalytic activity">
    <reaction>
        <text>a ubiquinone + NADH + 5 H(+)(in) = a ubiquinol + NAD(+) + 4 H(+)(out)</text>
        <dbReference type="Rhea" id="RHEA:29091"/>
        <dbReference type="Rhea" id="RHEA-COMP:9565"/>
        <dbReference type="Rhea" id="RHEA-COMP:9566"/>
        <dbReference type="ChEBI" id="CHEBI:15378"/>
        <dbReference type="ChEBI" id="CHEBI:16389"/>
        <dbReference type="ChEBI" id="CHEBI:17976"/>
        <dbReference type="ChEBI" id="CHEBI:57540"/>
        <dbReference type="ChEBI" id="CHEBI:57945"/>
        <dbReference type="EC" id="7.1.1.2"/>
    </reaction>
</comment>
<comment type="subcellular location">
    <subcellularLocation>
        <location evidence="1">Mitochondrion membrane</location>
        <topology evidence="1">Multi-pass membrane protein</topology>
    </subcellularLocation>
</comment>
<comment type="similarity">
    <text evidence="3">Belongs to the complex I subunit 4 family.</text>
</comment>
<name>NU4M_APILI</name>
<keyword id="KW-0249">Electron transport</keyword>
<keyword id="KW-0472">Membrane</keyword>
<keyword id="KW-0496">Mitochondrion</keyword>
<keyword id="KW-0520">NAD</keyword>
<keyword id="KW-0679">Respiratory chain</keyword>
<keyword id="KW-1278">Translocase</keyword>
<keyword id="KW-0812">Transmembrane</keyword>
<keyword id="KW-1133">Transmembrane helix</keyword>
<keyword id="KW-0813">Transport</keyword>
<keyword id="KW-0830">Ubiquinone</keyword>